<accession>Q85A72</accession>
<sequence length="471" mass="53611">MSIQISETLTFECETGNYHTFCPISCVAWLYQKIEDSFFLVIGTKTCGYFLQNALGVMIFAEPRYAMAELEEGDISAQLNDYEELKRLCFQIKKDRNPSVIIWIGTCTTEIIKMDLEGMAPKLEVELGVPIVVARANGLDYAFTQGEDTVLAAMAHRCPERDLLIDENKVIQNQTIQNIFSLFSQKKKEETLKYLELKNHPPLVLFGSLPSTVASQLSLELKRQSIQVSGWLPTQRYTDLPSLGDGVYVCGVNPFLSRTATTLIRRRKCKLIGAPFPIGPDGTRAWIEKISSVFGIKTKGLEEREQQVWQSLKNYLNLVRGKSVFFMGDNLLEISLARFLIRCGMIVYEIGIPYMDKRYQAAELALLRNTCREMCTPMPRIVEKPDNYNQIQRMRELQPDLAITGMAHANPLEARGINTKWSVEFTFAQIHGFTNAKDVLELVTRPLRRNNSLEDLGWTNLIKKDNKIKVI</sequence>
<gene>
    <name evidence="1" type="primary">chlN</name>
</gene>
<evidence type="ECO:0000255" key="1">
    <source>
        <dbReference type="HAMAP-Rule" id="MF_00352"/>
    </source>
</evidence>
<evidence type="ECO:0000269" key="2">
    <source>
    </source>
</evidence>
<evidence type="ECO:0000269" key="3">
    <source>
    </source>
</evidence>
<feature type="chain" id="PRO_0000208607" description="Light-independent protochlorophyllide reductase subunit N">
    <location>
        <begin position="1"/>
        <end position="471"/>
    </location>
</feature>
<feature type="binding site" evidence="1">
    <location>
        <position position="22"/>
    </location>
    <ligand>
        <name>[4Fe-4S] cluster</name>
        <dbReference type="ChEBI" id="CHEBI:49883"/>
        <note>ligand shared with heterodimeric partner</note>
    </ligand>
</feature>
<feature type="binding site" evidence="1">
    <location>
        <position position="47"/>
    </location>
    <ligand>
        <name>[4Fe-4S] cluster</name>
        <dbReference type="ChEBI" id="CHEBI:49883"/>
        <note>ligand shared with heterodimeric partner</note>
    </ligand>
</feature>
<feature type="binding site" evidence="1">
    <location>
        <position position="107"/>
    </location>
    <ligand>
        <name>[4Fe-4S] cluster</name>
        <dbReference type="ChEBI" id="CHEBI:49883"/>
        <note>ligand shared with heterodimeric partner</note>
    </ligand>
</feature>
<keyword id="KW-0004">4Fe-4S</keyword>
<keyword id="KW-0067">ATP-binding</keyword>
<keyword id="KW-0149">Chlorophyll biosynthesis</keyword>
<keyword id="KW-0150">Chloroplast</keyword>
<keyword id="KW-0408">Iron</keyword>
<keyword id="KW-0411">Iron-sulfur</keyword>
<keyword id="KW-0479">Metal-binding</keyword>
<keyword id="KW-0547">Nucleotide-binding</keyword>
<keyword id="KW-0560">Oxidoreductase</keyword>
<keyword id="KW-0602">Photosynthesis</keyword>
<keyword id="KW-0934">Plastid</keyword>
<keyword id="KW-0691">RNA editing</keyword>
<proteinExistence type="evidence at transcript level"/>
<reference key="1">
    <citation type="journal article" date="2003" name="Nucleic Acids Res.">
        <title>The complete nucleotide sequence of the hornwort (Anthoceros formosae) chloroplast genome: insight into the earliest land plants.</title>
        <authorList>
            <person name="Kugita M."/>
            <person name="Kaneko A."/>
            <person name="Yamamoto Y."/>
            <person name="Takeya Y."/>
            <person name="Matsumoto T."/>
            <person name="Yoshinaga K."/>
        </authorList>
    </citation>
    <scope>NUCLEOTIDE SEQUENCE [LARGE SCALE GENOMIC DNA]</scope>
    <scope>RNA EDITING</scope>
</reference>
<reference key="2">
    <citation type="journal article" date="2003" name="Nucleic Acids Res.">
        <title>RNA editing in hornwort chloroplasts makes more than half the genes functional.</title>
        <authorList>
            <person name="Kugita M."/>
            <person name="Yamamoto Y."/>
            <person name="Fujikawa T."/>
            <person name="Matsumoto T."/>
            <person name="Yoshinaga K."/>
        </authorList>
    </citation>
    <scope>NUCLEOTIDE SEQUENCE [MRNA]</scope>
    <scope>RNA EDITING</scope>
    <source>
        <tissue>Thallus</tissue>
    </source>
</reference>
<name>CHLN_ANTAG</name>
<organism>
    <name type="scientific">Anthoceros angustus</name>
    <name type="common">Hornwort</name>
    <name type="synonym">Anthoceros formosae</name>
    <dbReference type="NCBI Taxonomy" id="48387"/>
    <lineage>
        <taxon>Eukaryota</taxon>
        <taxon>Viridiplantae</taxon>
        <taxon>Streptophyta</taxon>
        <taxon>Embryophyta</taxon>
        <taxon>Anthocerotophyta</taxon>
        <taxon>Anthocerotopsida</taxon>
        <taxon>Anthocerotidae</taxon>
        <taxon>Anthocerotales</taxon>
        <taxon>Anthocerotaceae</taxon>
        <taxon>Anthoceros</taxon>
    </lineage>
</organism>
<dbReference type="EC" id="1.3.7.7" evidence="1"/>
<dbReference type="EMBL" id="AB086179">
    <property type="protein sequence ID" value="BAC55410.1"/>
    <property type="molecule type" value="Genomic_DNA"/>
</dbReference>
<dbReference type="EMBL" id="AB087493">
    <property type="protein sequence ID" value="BAC55510.1"/>
    <property type="molecule type" value="mRNA"/>
</dbReference>
<dbReference type="RefSeq" id="NP_777473.1">
    <property type="nucleotide sequence ID" value="NC_004543.1"/>
</dbReference>
<dbReference type="SMR" id="Q85A72"/>
<dbReference type="GeneID" id="2553489"/>
<dbReference type="UniPathway" id="UPA00670"/>
<dbReference type="GO" id="GO:0009507">
    <property type="term" value="C:chloroplast"/>
    <property type="evidence" value="ECO:0007669"/>
    <property type="project" value="UniProtKB-SubCell"/>
</dbReference>
<dbReference type="GO" id="GO:0051539">
    <property type="term" value="F:4 iron, 4 sulfur cluster binding"/>
    <property type="evidence" value="ECO:0007669"/>
    <property type="project" value="UniProtKB-UniRule"/>
</dbReference>
<dbReference type="GO" id="GO:0005524">
    <property type="term" value="F:ATP binding"/>
    <property type="evidence" value="ECO:0007669"/>
    <property type="project" value="UniProtKB-UniRule"/>
</dbReference>
<dbReference type="GO" id="GO:0046872">
    <property type="term" value="F:metal ion binding"/>
    <property type="evidence" value="ECO:0007669"/>
    <property type="project" value="UniProtKB-KW"/>
</dbReference>
<dbReference type="GO" id="GO:0016730">
    <property type="term" value="F:oxidoreductase activity, acting on iron-sulfur proteins as donors"/>
    <property type="evidence" value="ECO:0007669"/>
    <property type="project" value="InterPro"/>
</dbReference>
<dbReference type="GO" id="GO:0016636">
    <property type="term" value="F:oxidoreductase activity, acting on the CH-CH group of donors, iron-sulfur protein as acceptor"/>
    <property type="evidence" value="ECO:0007669"/>
    <property type="project" value="UniProtKB-UniRule"/>
</dbReference>
<dbReference type="GO" id="GO:0036068">
    <property type="term" value="P:light-independent chlorophyll biosynthetic process"/>
    <property type="evidence" value="ECO:0007669"/>
    <property type="project" value="UniProtKB-UniRule"/>
</dbReference>
<dbReference type="GO" id="GO:0019685">
    <property type="term" value="P:photosynthesis, dark reaction"/>
    <property type="evidence" value="ECO:0007669"/>
    <property type="project" value="InterPro"/>
</dbReference>
<dbReference type="CDD" id="cd01979">
    <property type="entry name" value="Pchlide_reductase_N"/>
    <property type="match status" value="1"/>
</dbReference>
<dbReference type="Gene3D" id="3.40.50.1980">
    <property type="entry name" value="Nitrogenase molybdenum iron protein domain"/>
    <property type="match status" value="3"/>
</dbReference>
<dbReference type="HAMAP" id="MF_00352">
    <property type="entry name" value="ChlN_BchN"/>
    <property type="match status" value="1"/>
</dbReference>
<dbReference type="InterPro" id="IPR050293">
    <property type="entry name" value="LIPOR_BchN/ChlN"/>
</dbReference>
<dbReference type="InterPro" id="IPR000510">
    <property type="entry name" value="Nase/OxRdtase_comp1"/>
</dbReference>
<dbReference type="InterPro" id="IPR005970">
    <property type="entry name" value="Protochl_reductN"/>
</dbReference>
<dbReference type="NCBIfam" id="TIGR01279">
    <property type="entry name" value="DPOR_bchN"/>
    <property type="match status" value="1"/>
</dbReference>
<dbReference type="NCBIfam" id="NF002768">
    <property type="entry name" value="PRK02842.1"/>
    <property type="match status" value="1"/>
</dbReference>
<dbReference type="PANTHER" id="PTHR39429">
    <property type="entry name" value="LIGHT-INDEPENDENT PROTOCHLOROPHYLLIDE REDUCTASE SUBUNIT N"/>
    <property type="match status" value="1"/>
</dbReference>
<dbReference type="PANTHER" id="PTHR39429:SF3">
    <property type="entry name" value="LIGHT-INDEPENDENT PROTOCHLOROPHYLLIDE REDUCTASE SUBUNIT N"/>
    <property type="match status" value="1"/>
</dbReference>
<dbReference type="Pfam" id="PF00148">
    <property type="entry name" value="Oxidored_nitro"/>
    <property type="match status" value="1"/>
</dbReference>
<dbReference type="PIRSF" id="PIRSF000162">
    <property type="entry name" value="P_chlorophyll_rd"/>
    <property type="match status" value="1"/>
</dbReference>
<dbReference type="SUPFAM" id="SSF53807">
    <property type="entry name" value="Helical backbone' metal receptor"/>
    <property type="match status" value="1"/>
</dbReference>
<geneLocation type="chloroplast"/>
<comment type="function">
    <text evidence="1">Component of the dark-operative protochlorophyllide reductase (DPOR) that uses Mg-ATP and reduced ferredoxin to reduce ring D of protochlorophyllide (Pchlide) to form chlorophyllide a (Chlide). This reaction is light-independent. The NB-protein (ChlN-ChlB) is the catalytic component of the complex.</text>
</comment>
<comment type="catalytic activity">
    <reaction evidence="1">
        <text>chlorophyllide a + oxidized 2[4Fe-4S]-[ferredoxin] + 2 ADP + 2 phosphate = protochlorophyllide a + reduced 2[4Fe-4S]-[ferredoxin] + 2 ATP + 2 H2O</text>
        <dbReference type="Rhea" id="RHEA:28202"/>
        <dbReference type="Rhea" id="RHEA-COMP:10002"/>
        <dbReference type="Rhea" id="RHEA-COMP:10004"/>
        <dbReference type="ChEBI" id="CHEBI:15377"/>
        <dbReference type="ChEBI" id="CHEBI:30616"/>
        <dbReference type="ChEBI" id="CHEBI:33722"/>
        <dbReference type="ChEBI" id="CHEBI:33723"/>
        <dbReference type="ChEBI" id="CHEBI:43474"/>
        <dbReference type="ChEBI" id="CHEBI:83348"/>
        <dbReference type="ChEBI" id="CHEBI:83350"/>
        <dbReference type="ChEBI" id="CHEBI:456216"/>
        <dbReference type="EC" id="1.3.7.7"/>
    </reaction>
</comment>
<comment type="cofactor">
    <cofactor evidence="1">
        <name>[4Fe-4S] cluster</name>
        <dbReference type="ChEBI" id="CHEBI:49883"/>
    </cofactor>
    <text evidence="1">Binds 1 [4Fe-4S] cluster per heterodimer. The cluster is bound at the heterodimer interface by residues from both subunits.</text>
</comment>
<comment type="pathway">
    <text evidence="1">Porphyrin-containing compound metabolism; chlorophyll biosynthesis (light-independent).</text>
</comment>
<comment type="subunit">
    <text evidence="1">Protochlorophyllide reductase is composed of three subunits; ChlL, ChlN and ChlB. Forms a heterotetramer of two ChlB and two ChlN subunits.</text>
</comment>
<comment type="subcellular location">
    <subcellularLocation>
        <location>Plastid</location>
        <location>Chloroplast</location>
    </subcellularLocation>
</comment>
<comment type="RNA editing">
    <location>
        <position position="30" evidence="2 3"/>
    </location>
    <location>
        <position position="32" evidence="2 3"/>
    </location>
    <location>
        <position position="60" evidence="2 3"/>
    </location>
    <location>
        <position position="65" evidence="2 3"/>
    </location>
    <location>
        <position position="70" evidence="2 3"/>
    </location>
    <location>
        <position position="85" evidence="2 3"/>
    </location>
    <location>
        <position position="101" evidence="2 3"/>
    </location>
    <location>
        <position position="111" evidence="2 3"/>
    </location>
    <location>
        <position position="143" evidence="2 3"/>
    </location>
    <location>
        <position position="145" evidence="2 3"/>
    </location>
    <location>
        <position position="151" evidence="2 3"/>
    </location>
    <location>
        <position position="152" evidence="2 3"/>
    </location>
    <location>
        <position position="254" evidence="2 3"/>
    </location>
    <location>
        <position position="255" evidence="2 3"/>
    </location>
    <location>
        <position position="256" evidence="2 3"/>
    </location>
    <location>
        <position position="258" evidence="2 3"/>
    </location>
    <location>
        <position position="277" evidence="2 3"/>
    </location>
    <location>
        <position position="325" evidence="2 3"/>
    </location>
    <location>
        <position position="326" evidence="2 3"/>
    </location>
    <location>
        <position position="353" evidence="2 3"/>
    </location>
    <location>
        <position position="364" evidence="2 3"/>
    </location>
    <location>
        <position position="366" evidence="2 3"/>
    </location>
    <location>
        <position position="379" evidence="2 3"/>
    </location>
    <location>
        <position position="429" evidence="2 3"/>
    </location>
    <location>
        <position position="440" evidence="2 3"/>
    </location>
    <text>The nonsense codons at positions 32, 145, 254 and 429 are modified to sense codons.</text>
</comment>
<comment type="similarity">
    <text evidence="1">Belongs to the BchN/ChlN family.</text>
</comment>
<protein>
    <recommendedName>
        <fullName evidence="1">Light-independent protochlorophyllide reductase subunit N</fullName>
        <shortName evidence="1">DPOR subunit N</shortName>
        <shortName evidence="1">LI-POR subunit N</shortName>
        <ecNumber evidence="1">1.3.7.7</ecNumber>
    </recommendedName>
</protein>